<dbReference type="EMBL" id="DS480379">
    <property type="protein sequence ID" value="EDO19360.1"/>
    <property type="molecule type" value="Genomic_DNA"/>
</dbReference>
<dbReference type="RefSeq" id="XP_001647218.1">
    <property type="nucleotide sequence ID" value="XM_001647168.1"/>
</dbReference>
<dbReference type="SMR" id="A7TE38"/>
<dbReference type="FunCoup" id="A7TE38">
    <property type="interactions" value="374"/>
</dbReference>
<dbReference type="STRING" id="436907.A7TE38"/>
<dbReference type="GeneID" id="5547708"/>
<dbReference type="KEGG" id="vpo:Kpol_1002p5"/>
<dbReference type="eggNOG" id="ENOG502QRVJ">
    <property type="taxonomic scope" value="Eukaryota"/>
</dbReference>
<dbReference type="HOGENOM" id="CLU_006525_0_0_1"/>
<dbReference type="InParanoid" id="A7TE38"/>
<dbReference type="OMA" id="WFRNSLE"/>
<dbReference type="OrthoDB" id="5426978at2759"/>
<dbReference type="PhylomeDB" id="A7TE38"/>
<dbReference type="Proteomes" id="UP000000267">
    <property type="component" value="Unassembled WGS sequence"/>
</dbReference>
<dbReference type="GO" id="GO:0005737">
    <property type="term" value="C:cytoplasm"/>
    <property type="evidence" value="ECO:0007669"/>
    <property type="project" value="UniProtKB-SubCell"/>
</dbReference>
<dbReference type="GO" id="GO:0005634">
    <property type="term" value="C:nucleus"/>
    <property type="evidence" value="ECO:0007669"/>
    <property type="project" value="UniProtKB-SubCell"/>
</dbReference>
<dbReference type="GO" id="GO:0003677">
    <property type="term" value="F:DNA binding"/>
    <property type="evidence" value="ECO:0007669"/>
    <property type="project" value="UniProtKB-KW"/>
</dbReference>
<dbReference type="GO" id="GO:0000981">
    <property type="term" value="F:DNA-binding transcription factor activity, RNA polymerase II-specific"/>
    <property type="evidence" value="ECO:0007669"/>
    <property type="project" value="InterPro"/>
</dbReference>
<dbReference type="GO" id="GO:0008270">
    <property type="term" value="F:zinc ion binding"/>
    <property type="evidence" value="ECO:0007669"/>
    <property type="project" value="InterPro"/>
</dbReference>
<dbReference type="CDD" id="cd00067">
    <property type="entry name" value="GAL4"/>
    <property type="match status" value="1"/>
</dbReference>
<dbReference type="Gene3D" id="4.10.240.10">
    <property type="entry name" value="Zn(2)-C6 fungal-type DNA-binding domain"/>
    <property type="match status" value="1"/>
</dbReference>
<dbReference type="InterPro" id="IPR050797">
    <property type="entry name" value="Carb_Metab_Trans_Reg"/>
</dbReference>
<dbReference type="InterPro" id="IPR036864">
    <property type="entry name" value="Zn2-C6_fun-type_DNA-bd_sf"/>
</dbReference>
<dbReference type="InterPro" id="IPR001138">
    <property type="entry name" value="Zn2Cys6_DnaBD"/>
</dbReference>
<dbReference type="PANTHER" id="PTHR31668:SF26">
    <property type="entry name" value="GLUCOSE TRANSPORT TRANSCRIPTION REGULATOR RGT1-RELATED"/>
    <property type="match status" value="1"/>
</dbReference>
<dbReference type="PANTHER" id="PTHR31668">
    <property type="entry name" value="GLUCOSE TRANSPORT TRANSCRIPTION REGULATOR RGT1-RELATED-RELATED"/>
    <property type="match status" value="1"/>
</dbReference>
<dbReference type="Pfam" id="PF00172">
    <property type="entry name" value="Zn_clus"/>
    <property type="match status" value="1"/>
</dbReference>
<dbReference type="SMART" id="SM00066">
    <property type="entry name" value="GAL4"/>
    <property type="match status" value="1"/>
</dbReference>
<dbReference type="SUPFAM" id="SSF57701">
    <property type="entry name" value="Zn2/Cys6 DNA-binding domain"/>
    <property type="match status" value="1"/>
</dbReference>
<dbReference type="PROSITE" id="PS00463">
    <property type="entry name" value="ZN2_CY6_FUNGAL_1"/>
    <property type="match status" value="1"/>
</dbReference>
<dbReference type="PROSITE" id="PS50048">
    <property type="entry name" value="ZN2_CY6_FUNGAL_2"/>
    <property type="match status" value="1"/>
</dbReference>
<gene>
    <name type="primary">RGT1</name>
    <name type="ORF">Kpol_1002p5</name>
</gene>
<proteinExistence type="inferred from homology"/>
<comment type="function">
    <text evidence="1">Glucose-responsive transcription factor that regulates expression of several glucose transporter (HXT) genes in response to glucose. In the absence of glucose, it functions as a transcriptional repressor, whereas high concentrations of glucose cause it to function as a transcriptional activator. In cells growing on low levels of glucose, has a neutral role, neither repressing nor activating transcription (By similarity).</text>
</comment>
<comment type="subcellular location">
    <subcellularLocation>
        <location evidence="2">Nucleus</location>
    </subcellularLocation>
    <subcellularLocation>
        <location evidence="1">Cytoplasm</location>
    </subcellularLocation>
</comment>
<comment type="similarity">
    <text evidence="4">Belongs to the EDS1/RGT1 family.</text>
</comment>
<reference key="1">
    <citation type="journal article" date="2007" name="Proc. Natl. Acad. Sci. U.S.A.">
        <title>Independent sorting-out of thousands of duplicated gene pairs in two yeast species descended from a whole-genome duplication.</title>
        <authorList>
            <person name="Scannell D.R."/>
            <person name="Frank A.C."/>
            <person name="Conant G.C."/>
            <person name="Byrne K.P."/>
            <person name="Woolfit M."/>
            <person name="Wolfe K.H."/>
        </authorList>
    </citation>
    <scope>NUCLEOTIDE SEQUENCE [LARGE SCALE GENOMIC DNA]</scope>
    <source>
        <strain>ATCC 22028 / DSM 70294 / BCRC 21397 / CBS 2163 / NBRC 10782 / NRRL Y-8283 / UCD 57-17</strain>
    </source>
</reference>
<keyword id="KW-0010">Activator</keyword>
<keyword id="KW-0963">Cytoplasm</keyword>
<keyword id="KW-0238">DNA-binding</keyword>
<keyword id="KW-0479">Metal-binding</keyword>
<keyword id="KW-0539">Nucleus</keyword>
<keyword id="KW-1185">Reference proteome</keyword>
<keyword id="KW-0678">Repressor</keyword>
<keyword id="KW-0804">Transcription</keyword>
<keyword id="KW-0805">Transcription regulation</keyword>
<keyword id="KW-0862">Zinc</keyword>
<protein>
    <recommendedName>
        <fullName>Glucose transport transcription regulator RGT1</fullName>
    </recommendedName>
    <alternativeName>
        <fullName>Restores glucose transport protein 1</fullName>
    </alternativeName>
</protein>
<name>RGT1_VANPO</name>
<sequence length="958" mass="104960">MTDIAESTAHPRDGVPPSQQTTASVASAALATATASASPTTGSATSTAAPGKRSRSSSTGSAKGSIGGKKATRACDQCRKRKIKCDYDNDKNVCSSCNRNGDRCQFNRVQLKRGPSKGFNRNNSTSSAAGASTTSSTHQTFNANASGNTNSSNNNNHNNNNNNSVLLPPITQYFQGNEQNHDQQFWKVPVDLAGHLSPHHSQSHLHRDSVDSATSNNSNLNINGINIVDNSTTNSQSGGYFPVSACRSRASSVPSFPRKPPMQIQPPMTSMYASSLGGGTPATGAIGASNTAVSGATVPGTSSKRRKSVVSSNESPRTSRASLLPRPDFAVVNLVPVPQNVVTPASSLPAVPSGPLPSTGVGVGGSTGQVRLTDLDLINTYYEFVHLNFPVIPINKKALTSDILVINTSIEELNDLVIVWFRNSLELLVTVSLEQPQTQSTHAYTESLNSCFQNVVNLYPRLKQNNGIDPKVKIVYLCTFLILIYVLFFLGQHNSFIISVSVTIFNNFGLYGKLLSLNTSSPDSSSPYDIIFVRLYLLLVTFDSSYSMALGTPKLLNLEINGLVDKFFNLKSQNEHLFIDENLIKVNCILKNLELGEYICNASHMKDSSDAMKVIKSTYMSKKHQSKKADHSSSVSPMFISEWFQKFLVDKKNLISLLLDYQLRINDITPLQLSKLYVDLTNSLCALITVILEILKLMMKLNPTNSIDYNYRPLQHFDIDKPPSGGGGSSSTNTSSNPYSNPNSNEFYQKLLGLSSDRNTNLADMTRGCITPFAIITINELFNVTELIKNIPSSLISVVMESTKEEKENTINPQDLVLKLSNSMNEIVQITSLLTMVKPYKGIDSSYPRWQKFSKRSGPIPSMAPSNTATSTIQDFSEYNMTRSPSLGSSAYSNNPHSQHSDHNFNETNDYNDNISIFKKIYYENNNIQNNTTPQNEVLQSYIDTAWRLLDDSELGWL</sequence>
<evidence type="ECO:0000250" key="1"/>
<evidence type="ECO:0000255" key="2">
    <source>
        <dbReference type="PROSITE-ProRule" id="PRU00227"/>
    </source>
</evidence>
<evidence type="ECO:0000256" key="3">
    <source>
        <dbReference type="SAM" id="MobiDB-lite"/>
    </source>
</evidence>
<evidence type="ECO:0000305" key="4"/>
<feature type="chain" id="PRO_0000408016" description="Glucose transport transcription regulator RGT1">
    <location>
        <begin position="1"/>
        <end position="958"/>
    </location>
</feature>
<feature type="DNA-binding region" description="Zn(2)-C6 fungal-type" evidence="2">
    <location>
        <begin position="75"/>
        <end position="104"/>
    </location>
</feature>
<feature type="region of interest" description="Disordered" evidence="3">
    <location>
        <begin position="1"/>
        <end position="73"/>
    </location>
</feature>
<feature type="region of interest" description="Disordered" evidence="3">
    <location>
        <begin position="113"/>
        <end position="165"/>
    </location>
</feature>
<feature type="region of interest" description="Disordered" evidence="3">
    <location>
        <begin position="197"/>
        <end position="218"/>
    </location>
</feature>
<feature type="region of interest" description="Disordered" evidence="3">
    <location>
        <begin position="291"/>
        <end position="322"/>
    </location>
</feature>
<feature type="region of interest" description="Disordered" evidence="3">
    <location>
        <begin position="720"/>
        <end position="740"/>
    </location>
</feature>
<feature type="region of interest" description="Disordered" evidence="3">
    <location>
        <begin position="884"/>
        <end position="908"/>
    </location>
</feature>
<feature type="compositionally biased region" description="Low complexity" evidence="3">
    <location>
        <begin position="21"/>
        <end position="64"/>
    </location>
</feature>
<feature type="compositionally biased region" description="Low complexity" evidence="3">
    <location>
        <begin position="124"/>
        <end position="164"/>
    </location>
</feature>
<feature type="compositionally biased region" description="Low complexity" evidence="3">
    <location>
        <begin position="730"/>
        <end position="740"/>
    </location>
</feature>
<feature type="compositionally biased region" description="Polar residues" evidence="3">
    <location>
        <begin position="884"/>
        <end position="898"/>
    </location>
</feature>
<organism>
    <name type="scientific">Vanderwaltozyma polyspora (strain ATCC 22028 / DSM 70294 / BCRC 21397 / CBS 2163 / NBRC 10782 / NRRL Y-8283 / UCD 57-17)</name>
    <name type="common">Kluyveromyces polysporus</name>
    <dbReference type="NCBI Taxonomy" id="436907"/>
    <lineage>
        <taxon>Eukaryota</taxon>
        <taxon>Fungi</taxon>
        <taxon>Dikarya</taxon>
        <taxon>Ascomycota</taxon>
        <taxon>Saccharomycotina</taxon>
        <taxon>Saccharomycetes</taxon>
        <taxon>Saccharomycetales</taxon>
        <taxon>Saccharomycetaceae</taxon>
        <taxon>Vanderwaltozyma</taxon>
    </lineage>
</organism>
<accession>A7TE38</accession>